<comment type="similarity">
    <text evidence="1">Belongs to the UPF0473 family.</text>
</comment>
<dbReference type="EMBL" id="CP000679">
    <property type="protein sequence ID" value="ABP67191.1"/>
    <property type="molecule type" value="Genomic_DNA"/>
</dbReference>
<dbReference type="RefSeq" id="WP_011917127.1">
    <property type="nucleotide sequence ID" value="NC_009437.1"/>
</dbReference>
<dbReference type="STRING" id="351627.Csac_1599"/>
<dbReference type="KEGG" id="csc:Csac_1599"/>
<dbReference type="eggNOG" id="COG3906">
    <property type="taxonomic scope" value="Bacteria"/>
</dbReference>
<dbReference type="HOGENOM" id="CLU_146610_8_1_9"/>
<dbReference type="OrthoDB" id="9811971at2"/>
<dbReference type="Proteomes" id="UP000000256">
    <property type="component" value="Chromosome"/>
</dbReference>
<dbReference type="HAMAP" id="MF_01448">
    <property type="entry name" value="UPF0473"/>
    <property type="match status" value="1"/>
</dbReference>
<dbReference type="InterPro" id="IPR009711">
    <property type="entry name" value="UPF0473"/>
</dbReference>
<dbReference type="Pfam" id="PF06949">
    <property type="entry name" value="DUF1292"/>
    <property type="match status" value="1"/>
</dbReference>
<gene>
    <name type="ordered locus">Csac_1599</name>
</gene>
<name>Y1599_CALS8</name>
<evidence type="ECO:0000255" key="1">
    <source>
        <dbReference type="HAMAP-Rule" id="MF_01448"/>
    </source>
</evidence>
<accession>A4XJV6</accession>
<organism>
    <name type="scientific">Caldicellulosiruptor saccharolyticus (strain ATCC 43494 / DSM 8903 / Tp8T 6331)</name>
    <dbReference type="NCBI Taxonomy" id="351627"/>
    <lineage>
        <taxon>Bacteria</taxon>
        <taxon>Bacillati</taxon>
        <taxon>Bacillota</taxon>
        <taxon>Bacillota incertae sedis</taxon>
        <taxon>Caldicellulosiruptorales</taxon>
        <taxon>Caldicellulosiruptoraceae</taxon>
        <taxon>Caldicellulosiruptor</taxon>
    </lineage>
</organism>
<proteinExistence type="inferred from homology"/>
<sequence length="100" mass="11931">MDMFADNVVTLVDEEGREISFEMLDKVNYNGNDYIVLLPLEEIEKEDEEAEVIILRIEDRDGEEVYVGVEDEEELENVFEIFQSRFDDEDFDMYDEEDEE</sequence>
<feature type="chain" id="PRO_1000200970" description="UPF0473 protein Csac_1599">
    <location>
        <begin position="1"/>
        <end position="100"/>
    </location>
</feature>
<reference key="1">
    <citation type="submission" date="2007-04" db="EMBL/GenBank/DDBJ databases">
        <title>Genome sequence of the thermophilic hydrogen-producing bacterium Caldicellulosiruptor saccharolyticus DSM 8903.</title>
        <authorList>
            <person name="Copeland A."/>
            <person name="Lucas S."/>
            <person name="Lapidus A."/>
            <person name="Barry K."/>
            <person name="Detter J.C."/>
            <person name="Glavina del Rio T."/>
            <person name="Hammon N."/>
            <person name="Israni S."/>
            <person name="Dalin E."/>
            <person name="Tice H."/>
            <person name="Pitluck S."/>
            <person name="Kiss H."/>
            <person name="Brettin T."/>
            <person name="Bruce D."/>
            <person name="Han C."/>
            <person name="Schmutz J."/>
            <person name="Larimer F."/>
            <person name="Land M."/>
            <person name="Hauser L."/>
            <person name="Kyrpides N."/>
            <person name="Lykidis A."/>
            <person name="van de Werken H.J.G."/>
            <person name="Verhaart M.R.A."/>
            <person name="VanFossen A.L."/>
            <person name="Lewis D.L."/>
            <person name="Nichols J.D."/>
            <person name="Goorissen H.P."/>
            <person name="van Niel E.W.J."/>
            <person name="Stams F.J.M."/>
            <person name="Willquist K.U."/>
            <person name="Ward D.E."/>
            <person name="van der Oost J."/>
            <person name="Kelly R.M."/>
            <person name="Kengen S.M.W."/>
            <person name="Richardson P."/>
        </authorList>
    </citation>
    <scope>NUCLEOTIDE SEQUENCE [LARGE SCALE GENOMIC DNA]</scope>
    <source>
        <strain>ATCC 43494 / DSM 8903 / Tp8T 6331</strain>
    </source>
</reference>
<protein>
    <recommendedName>
        <fullName evidence="1">UPF0473 protein Csac_1599</fullName>
    </recommendedName>
</protein>